<reference key="1">
    <citation type="journal article" date="2004" name="Nucleic Acids Res.">
        <title>Unique features revealed by the genome sequence of Acinetobacter sp. ADP1, a versatile and naturally transformation competent bacterium.</title>
        <authorList>
            <person name="Barbe V."/>
            <person name="Vallenet D."/>
            <person name="Fonknechten N."/>
            <person name="Kreimeyer A."/>
            <person name="Oztas S."/>
            <person name="Labarre L."/>
            <person name="Cruveiller S."/>
            <person name="Robert C."/>
            <person name="Duprat S."/>
            <person name="Wincker P."/>
            <person name="Ornston L.N."/>
            <person name="Weissenbach J."/>
            <person name="Marliere P."/>
            <person name="Cohen G.N."/>
            <person name="Medigue C."/>
        </authorList>
    </citation>
    <scope>NUCLEOTIDE SEQUENCE [LARGE SCALE GENOMIC DNA]</scope>
    <source>
        <strain>ATCC 33305 / BD413 / ADP1</strain>
    </source>
</reference>
<protein>
    <recommendedName>
        <fullName evidence="1">N-acetyl-gamma-glutamyl-phosphate reductase</fullName>
        <shortName evidence="1">AGPR</shortName>
        <ecNumber evidence="1">1.2.1.38</ecNumber>
    </recommendedName>
    <alternativeName>
        <fullName evidence="1">N-acetyl-glutamate semialdehyde dehydrogenase</fullName>
        <shortName evidence="1">NAGSA dehydrogenase</shortName>
    </alternativeName>
</protein>
<dbReference type="EC" id="1.2.1.38" evidence="1"/>
<dbReference type="EMBL" id="CR543861">
    <property type="protein sequence ID" value="CAG68227.1"/>
    <property type="molecule type" value="Genomic_DNA"/>
</dbReference>
<dbReference type="RefSeq" id="WP_004925705.1">
    <property type="nucleotide sequence ID" value="NC_005966.1"/>
</dbReference>
<dbReference type="SMR" id="Q6FCI4"/>
<dbReference type="STRING" id="202950.GCA_001485005_01118"/>
<dbReference type="GeneID" id="45233776"/>
<dbReference type="KEGG" id="aci:ACIAD1360"/>
<dbReference type="eggNOG" id="COG0002">
    <property type="taxonomic scope" value="Bacteria"/>
</dbReference>
<dbReference type="HOGENOM" id="CLU_006384_0_1_6"/>
<dbReference type="OrthoDB" id="9801289at2"/>
<dbReference type="BioCyc" id="ASP62977:ACIAD_RS06270-MONOMER"/>
<dbReference type="UniPathway" id="UPA00068">
    <property type="reaction ID" value="UER00108"/>
</dbReference>
<dbReference type="Proteomes" id="UP000000430">
    <property type="component" value="Chromosome"/>
</dbReference>
<dbReference type="GO" id="GO:0005737">
    <property type="term" value="C:cytoplasm"/>
    <property type="evidence" value="ECO:0007669"/>
    <property type="project" value="UniProtKB-SubCell"/>
</dbReference>
<dbReference type="GO" id="GO:0003942">
    <property type="term" value="F:N-acetyl-gamma-glutamyl-phosphate reductase activity"/>
    <property type="evidence" value="ECO:0007669"/>
    <property type="project" value="UniProtKB-UniRule"/>
</dbReference>
<dbReference type="GO" id="GO:0051287">
    <property type="term" value="F:NAD binding"/>
    <property type="evidence" value="ECO:0007669"/>
    <property type="project" value="InterPro"/>
</dbReference>
<dbReference type="GO" id="GO:0070401">
    <property type="term" value="F:NADP+ binding"/>
    <property type="evidence" value="ECO:0007669"/>
    <property type="project" value="InterPro"/>
</dbReference>
<dbReference type="GO" id="GO:0006526">
    <property type="term" value="P:L-arginine biosynthetic process"/>
    <property type="evidence" value="ECO:0007669"/>
    <property type="project" value="UniProtKB-UniRule"/>
</dbReference>
<dbReference type="CDD" id="cd23934">
    <property type="entry name" value="AGPR_1_C"/>
    <property type="match status" value="1"/>
</dbReference>
<dbReference type="CDD" id="cd17895">
    <property type="entry name" value="AGPR_1_N"/>
    <property type="match status" value="1"/>
</dbReference>
<dbReference type="FunFam" id="3.30.360.10:FF:000014">
    <property type="entry name" value="N-acetyl-gamma-glutamyl-phosphate reductase"/>
    <property type="match status" value="1"/>
</dbReference>
<dbReference type="Gene3D" id="3.30.360.10">
    <property type="entry name" value="Dihydrodipicolinate Reductase, domain 2"/>
    <property type="match status" value="1"/>
</dbReference>
<dbReference type="Gene3D" id="3.40.50.720">
    <property type="entry name" value="NAD(P)-binding Rossmann-like Domain"/>
    <property type="match status" value="1"/>
</dbReference>
<dbReference type="HAMAP" id="MF_00150">
    <property type="entry name" value="ArgC_type1"/>
    <property type="match status" value="1"/>
</dbReference>
<dbReference type="InterPro" id="IPR023013">
    <property type="entry name" value="AGPR_AS"/>
</dbReference>
<dbReference type="InterPro" id="IPR000706">
    <property type="entry name" value="AGPR_type-1"/>
</dbReference>
<dbReference type="InterPro" id="IPR036291">
    <property type="entry name" value="NAD(P)-bd_dom_sf"/>
</dbReference>
<dbReference type="InterPro" id="IPR050085">
    <property type="entry name" value="NAGSA_dehydrogenase"/>
</dbReference>
<dbReference type="InterPro" id="IPR000534">
    <property type="entry name" value="Semialdehyde_DH_NAD-bd"/>
</dbReference>
<dbReference type="NCBIfam" id="TIGR01850">
    <property type="entry name" value="argC"/>
    <property type="match status" value="1"/>
</dbReference>
<dbReference type="PANTHER" id="PTHR32338:SF10">
    <property type="entry name" value="N-ACETYL-GAMMA-GLUTAMYL-PHOSPHATE REDUCTASE, CHLOROPLASTIC-RELATED"/>
    <property type="match status" value="1"/>
</dbReference>
<dbReference type="PANTHER" id="PTHR32338">
    <property type="entry name" value="N-ACETYL-GAMMA-GLUTAMYL-PHOSPHATE REDUCTASE, CHLOROPLASTIC-RELATED-RELATED"/>
    <property type="match status" value="1"/>
</dbReference>
<dbReference type="Pfam" id="PF01118">
    <property type="entry name" value="Semialdhyde_dh"/>
    <property type="match status" value="1"/>
</dbReference>
<dbReference type="Pfam" id="PF22698">
    <property type="entry name" value="Semialdhyde_dhC_1"/>
    <property type="match status" value="1"/>
</dbReference>
<dbReference type="SMART" id="SM00859">
    <property type="entry name" value="Semialdhyde_dh"/>
    <property type="match status" value="1"/>
</dbReference>
<dbReference type="SUPFAM" id="SSF55347">
    <property type="entry name" value="Glyceraldehyde-3-phosphate dehydrogenase-like, C-terminal domain"/>
    <property type="match status" value="1"/>
</dbReference>
<dbReference type="SUPFAM" id="SSF51735">
    <property type="entry name" value="NAD(P)-binding Rossmann-fold domains"/>
    <property type="match status" value="1"/>
</dbReference>
<dbReference type="PROSITE" id="PS01224">
    <property type="entry name" value="ARGC"/>
    <property type="match status" value="1"/>
</dbReference>
<evidence type="ECO:0000255" key="1">
    <source>
        <dbReference type="HAMAP-Rule" id="MF_00150"/>
    </source>
</evidence>
<gene>
    <name evidence="1" type="primary">argC</name>
    <name type="ordered locus">ACIAD1360</name>
</gene>
<keyword id="KW-0028">Amino-acid biosynthesis</keyword>
<keyword id="KW-0055">Arginine biosynthesis</keyword>
<keyword id="KW-0963">Cytoplasm</keyword>
<keyword id="KW-0521">NADP</keyword>
<keyword id="KW-0560">Oxidoreductase</keyword>
<proteinExistence type="inferred from homology"/>
<name>ARGC_ACIAD</name>
<comment type="function">
    <text evidence="1">Catalyzes the NADPH-dependent reduction of N-acetyl-5-glutamyl phosphate to yield N-acetyl-L-glutamate 5-semialdehyde.</text>
</comment>
<comment type="catalytic activity">
    <reaction evidence="1">
        <text>N-acetyl-L-glutamate 5-semialdehyde + phosphate + NADP(+) = N-acetyl-L-glutamyl 5-phosphate + NADPH + H(+)</text>
        <dbReference type="Rhea" id="RHEA:21588"/>
        <dbReference type="ChEBI" id="CHEBI:15378"/>
        <dbReference type="ChEBI" id="CHEBI:29123"/>
        <dbReference type="ChEBI" id="CHEBI:43474"/>
        <dbReference type="ChEBI" id="CHEBI:57783"/>
        <dbReference type="ChEBI" id="CHEBI:57936"/>
        <dbReference type="ChEBI" id="CHEBI:58349"/>
        <dbReference type="EC" id="1.2.1.38"/>
    </reaction>
</comment>
<comment type="pathway">
    <text evidence="1">Amino-acid biosynthesis; L-arginine biosynthesis; N(2)-acetyl-L-ornithine from L-glutamate: step 3/4.</text>
</comment>
<comment type="subcellular location">
    <subcellularLocation>
        <location evidence="1">Cytoplasm</location>
    </subcellularLocation>
</comment>
<comment type="similarity">
    <text evidence="1">Belongs to the NAGSA dehydrogenase family. Type 1 subfamily.</text>
</comment>
<feature type="chain" id="PRO_0000112373" description="N-acetyl-gamma-glutamyl-phosphate reductase">
    <location>
        <begin position="1"/>
        <end position="349"/>
    </location>
</feature>
<feature type="active site" evidence="1">
    <location>
        <position position="149"/>
    </location>
</feature>
<accession>Q6FCI4</accession>
<sequence>MISVGIVGGTGYTGVELLRLLLRHPQVTVRVLTSRTEAGKRVADMFPSLRGHTDLEFSDLNEDVLKQCDVVFFATPHGVAMKYAKGLVAAGVKVIDLAADFRLQNLEQFEKWYGLEHECPEILKDSVYGLSELNREKIKTAKVVGNPGCYPTTVQLGLAPLLQADVALIKPENIIIDAKSGVSGAGRKASLGMIYSENADNFKAYGVAGHRHHPEIVEALEHISGQKGVFDQIIFVPHLVPMIRGMLSTIYIDLTEEGANSDLQSLYEIYYANEKFVDVMPANSSPETRSVRGANELRIALYKPQPNKLVILSVQDNLVKGAAGQAVQNMNLMFNLDEDTGLTGIGLLP</sequence>
<organism>
    <name type="scientific">Acinetobacter baylyi (strain ATCC 33305 / BD413 / ADP1)</name>
    <dbReference type="NCBI Taxonomy" id="62977"/>
    <lineage>
        <taxon>Bacteria</taxon>
        <taxon>Pseudomonadati</taxon>
        <taxon>Pseudomonadota</taxon>
        <taxon>Gammaproteobacteria</taxon>
        <taxon>Moraxellales</taxon>
        <taxon>Moraxellaceae</taxon>
        <taxon>Acinetobacter</taxon>
    </lineage>
</organism>